<feature type="chain" id="PRO_1000051204" description="Small ribosomal subunit protein uS9">
    <location>
        <begin position="1"/>
        <end position="130"/>
    </location>
</feature>
<feature type="region of interest" description="Disordered" evidence="2">
    <location>
        <begin position="102"/>
        <end position="130"/>
    </location>
</feature>
<feature type="compositionally biased region" description="Basic residues" evidence="2">
    <location>
        <begin position="111"/>
        <end position="130"/>
    </location>
</feature>
<evidence type="ECO:0000255" key="1">
    <source>
        <dbReference type="HAMAP-Rule" id="MF_00532"/>
    </source>
</evidence>
<evidence type="ECO:0000256" key="2">
    <source>
        <dbReference type="SAM" id="MobiDB-lite"/>
    </source>
</evidence>
<evidence type="ECO:0000305" key="3"/>
<keyword id="KW-0687">Ribonucleoprotein</keyword>
<keyword id="KW-0689">Ribosomal protein</keyword>
<gene>
    <name evidence="1" type="primary">rpsI</name>
    <name type="ordered locus">CLB_3501</name>
</gene>
<proteinExistence type="inferred from homology"/>
<name>RS9_CLOB1</name>
<sequence>MAKVQYFGTGRRKKSVARVRLVAGDGKVIINNRDIENYFPIETLRVIVNQPLVLTETKDKYDVLVNVHGGGFTGQAGAVRHGISRALVKADENMKSSLKKAGFLTRDPRMKERKKYGLKKARRSPQFSKR</sequence>
<dbReference type="EMBL" id="CP000726">
    <property type="protein sequence ID" value="ABS34608.1"/>
    <property type="molecule type" value="Genomic_DNA"/>
</dbReference>
<dbReference type="RefSeq" id="WP_003357662.1">
    <property type="nucleotide sequence ID" value="NC_009697.1"/>
</dbReference>
<dbReference type="SMR" id="A7FZ37"/>
<dbReference type="GeneID" id="5184277"/>
<dbReference type="KEGG" id="cba:CLB_3501"/>
<dbReference type="HOGENOM" id="CLU_046483_2_1_9"/>
<dbReference type="GO" id="GO:0022627">
    <property type="term" value="C:cytosolic small ribosomal subunit"/>
    <property type="evidence" value="ECO:0007669"/>
    <property type="project" value="TreeGrafter"/>
</dbReference>
<dbReference type="GO" id="GO:0003723">
    <property type="term" value="F:RNA binding"/>
    <property type="evidence" value="ECO:0007669"/>
    <property type="project" value="TreeGrafter"/>
</dbReference>
<dbReference type="GO" id="GO:0003735">
    <property type="term" value="F:structural constituent of ribosome"/>
    <property type="evidence" value="ECO:0007669"/>
    <property type="project" value="InterPro"/>
</dbReference>
<dbReference type="GO" id="GO:0006412">
    <property type="term" value="P:translation"/>
    <property type="evidence" value="ECO:0007669"/>
    <property type="project" value="UniProtKB-UniRule"/>
</dbReference>
<dbReference type="FunFam" id="3.30.230.10:FF:000001">
    <property type="entry name" value="30S ribosomal protein S9"/>
    <property type="match status" value="1"/>
</dbReference>
<dbReference type="Gene3D" id="3.30.230.10">
    <property type="match status" value="1"/>
</dbReference>
<dbReference type="HAMAP" id="MF_00532_B">
    <property type="entry name" value="Ribosomal_uS9_B"/>
    <property type="match status" value="1"/>
</dbReference>
<dbReference type="InterPro" id="IPR020568">
    <property type="entry name" value="Ribosomal_Su5_D2-typ_SF"/>
</dbReference>
<dbReference type="InterPro" id="IPR000754">
    <property type="entry name" value="Ribosomal_uS9"/>
</dbReference>
<dbReference type="InterPro" id="IPR023035">
    <property type="entry name" value="Ribosomal_uS9_bac/plastid"/>
</dbReference>
<dbReference type="InterPro" id="IPR020574">
    <property type="entry name" value="Ribosomal_uS9_CS"/>
</dbReference>
<dbReference type="InterPro" id="IPR014721">
    <property type="entry name" value="Ribsml_uS5_D2-typ_fold_subgr"/>
</dbReference>
<dbReference type="NCBIfam" id="NF001099">
    <property type="entry name" value="PRK00132.1"/>
    <property type="match status" value="1"/>
</dbReference>
<dbReference type="PANTHER" id="PTHR21569">
    <property type="entry name" value="RIBOSOMAL PROTEIN S9"/>
    <property type="match status" value="1"/>
</dbReference>
<dbReference type="PANTHER" id="PTHR21569:SF1">
    <property type="entry name" value="SMALL RIBOSOMAL SUBUNIT PROTEIN US9M"/>
    <property type="match status" value="1"/>
</dbReference>
<dbReference type="Pfam" id="PF00380">
    <property type="entry name" value="Ribosomal_S9"/>
    <property type="match status" value="1"/>
</dbReference>
<dbReference type="SUPFAM" id="SSF54211">
    <property type="entry name" value="Ribosomal protein S5 domain 2-like"/>
    <property type="match status" value="1"/>
</dbReference>
<dbReference type="PROSITE" id="PS00360">
    <property type="entry name" value="RIBOSOMAL_S9"/>
    <property type="match status" value="1"/>
</dbReference>
<accession>A7FZ37</accession>
<protein>
    <recommendedName>
        <fullName evidence="1">Small ribosomal subunit protein uS9</fullName>
    </recommendedName>
    <alternativeName>
        <fullName evidence="3">30S ribosomal protein S9</fullName>
    </alternativeName>
</protein>
<comment type="similarity">
    <text evidence="1">Belongs to the universal ribosomal protein uS9 family.</text>
</comment>
<organism>
    <name type="scientific">Clostridium botulinum (strain ATCC 19397 / Type A)</name>
    <dbReference type="NCBI Taxonomy" id="441770"/>
    <lineage>
        <taxon>Bacteria</taxon>
        <taxon>Bacillati</taxon>
        <taxon>Bacillota</taxon>
        <taxon>Clostridia</taxon>
        <taxon>Eubacteriales</taxon>
        <taxon>Clostridiaceae</taxon>
        <taxon>Clostridium</taxon>
    </lineage>
</organism>
<reference key="1">
    <citation type="journal article" date="2007" name="PLoS ONE">
        <title>Analysis of the neurotoxin complex genes in Clostridium botulinum A1-A4 and B1 strains: BoNT/A3, /Ba4 and /B1 clusters are located within plasmids.</title>
        <authorList>
            <person name="Smith T.J."/>
            <person name="Hill K.K."/>
            <person name="Foley B.T."/>
            <person name="Detter J.C."/>
            <person name="Munk A.C."/>
            <person name="Bruce D.C."/>
            <person name="Doggett N.A."/>
            <person name="Smith L.A."/>
            <person name="Marks J.D."/>
            <person name="Xie G."/>
            <person name="Brettin T.S."/>
        </authorList>
    </citation>
    <scope>NUCLEOTIDE SEQUENCE [LARGE SCALE GENOMIC DNA]</scope>
    <source>
        <strain>ATCC 19397 / Type A</strain>
    </source>
</reference>